<feature type="chain" id="PRO_0000348847" description="tRNA-cytidine(32) 2-sulfurtransferase">
    <location>
        <begin position="1"/>
        <end position="319"/>
    </location>
</feature>
<feature type="short sequence motif" description="PP-loop motif" evidence="1">
    <location>
        <begin position="45"/>
        <end position="50"/>
    </location>
</feature>
<feature type="binding site" evidence="1">
    <location>
        <position position="120"/>
    </location>
    <ligand>
        <name>[4Fe-4S] cluster</name>
        <dbReference type="ChEBI" id="CHEBI:49883"/>
    </ligand>
</feature>
<feature type="binding site" evidence="1">
    <location>
        <position position="123"/>
    </location>
    <ligand>
        <name>[4Fe-4S] cluster</name>
        <dbReference type="ChEBI" id="CHEBI:49883"/>
    </ligand>
</feature>
<feature type="binding site" evidence="1">
    <location>
        <position position="211"/>
    </location>
    <ligand>
        <name>[4Fe-4S] cluster</name>
        <dbReference type="ChEBI" id="CHEBI:49883"/>
    </ligand>
</feature>
<organism>
    <name type="scientific">Shewanella woodyi (strain ATCC 51908 / MS32)</name>
    <dbReference type="NCBI Taxonomy" id="392500"/>
    <lineage>
        <taxon>Bacteria</taxon>
        <taxon>Pseudomonadati</taxon>
        <taxon>Pseudomonadota</taxon>
        <taxon>Gammaproteobacteria</taxon>
        <taxon>Alteromonadales</taxon>
        <taxon>Shewanellaceae</taxon>
        <taxon>Shewanella</taxon>
    </lineage>
</organism>
<sequence length="319" mass="35621">MSVDLSAQQVTRMKKLQKKIRSEVGKAISDYNMVEEGDRIMCCLSGGKDSYAMLDILLDLQQRAPIKFEIVAVNLDQKQPGFPEHVLPAYLDSLGVAYHILEKDTYSIVRDKIPEGQKTCSLCSRLRRGTLYGFAQKIGATKIALGHHRDDIIETLFLNMFFAGKQKAMPPKLLSDDGANMVIRPLAYAREKDIAEYAELKGFPIIPCNLCGSQENLKRASVKEMLNQWDVEHPGRIESIFTAMQNTSPSQGVDREQFDFISLTRDANAPLKGEVAESDLPAFDFVDVSNNGHIDLDAASKAKRVNPEHKINIVSTYTP</sequence>
<name>TTCA_SHEWM</name>
<reference key="1">
    <citation type="submission" date="2008-02" db="EMBL/GenBank/DDBJ databases">
        <title>Complete sequence of Shewanella woodyi ATCC 51908.</title>
        <authorList>
            <consortium name="US DOE Joint Genome Institute"/>
            <person name="Copeland A."/>
            <person name="Lucas S."/>
            <person name="Lapidus A."/>
            <person name="Glavina del Rio T."/>
            <person name="Dalin E."/>
            <person name="Tice H."/>
            <person name="Bruce D."/>
            <person name="Goodwin L."/>
            <person name="Pitluck S."/>
            <person name="Sims D."/>
            <person name="Brettin T."/>
            <person name="Detter J.C."/>
            <person name="Han C."/>
            <person name="Kuske C.R."/>
            <person name="Schmutz J."/>
            <person name="Larimer F."/>
            <person name="Land M."/>
            <person name="Hauser L."/>
            <person name="Kyrpides N."/>
            <person name="Lykidis A."/>
            <person name="Zhao J.-S."/>
            <person name="Richardson P."/>
        </authorList>
    </citation>
    <scope>NUCLEOTIDE SEQUENCE [LARGE SCALE GENOMIC DNA]</scope>
    <source>
        <strain>ATCC 51908 / MS32</strain>
    </source>
</reference>
<keyword id="KW-0004">4Fe-4S</keyword>
<keyword id="KW-0067">ATP-binding</keyword>
<keyword id="KW-0963">Cytoplasm</keyword>
<keyword id="KW-0408">Iron</keyword>
<keyword id="KW-0411">Iron-sulfur</keyword>
<keyword id="KW-0460">Magnesium</keyword>
<keyword id="KW-0479">Metal-binding</keyword>
<keyword id="KW-0547">Nucleotide-binding</keyword>
<keyword id="KW-1185">Reference proteome</keyword>
<keyword id="KW-0694">RNA-binding</keyword>
<keyword id="KW-0808">Transferase</keyword>
<keyword id="KW-0819">tRNA processing</keyword>
<keyword id="KW-0820">tRNA-binding</keyword>
<evidence type="ECO:0000255" key="1">
    <source>
        <dbReference type="HAMAP-Rule" id="MF_01850"/>
    </source>
</evidence>
<accession>B1KFY6</accession>
<dbReference type="EC" id="2.8.1.-" evidence="1"/>
<dbReference type="EMBL" id="CP000961">
    <property type="protein sequence ID" value="ACA86693.1"/>
    <property type="molecule type" value="Genomic_DNA"/>
</dbReference>
<dbReference type="RefSeq" id="WP_012325035.1">
    <property type="nucleotide sequence ID" value="NC_010506.1"/>
</dbReference>
<dbReference type="SMR" id="B1KFY6"/>
<dbReference type="STRING" id="392500.Swoo_2415"/>
<dbReference type="KEGG" id="swd:Swoo_2415"/>
<dbReference type="eggNOG" id="COG0037">
    <property type="taxonomic scope" value="Bacteria"/>
</dbReference>
<dbReference type="HOGENOM" id="CLU_026481_0_0_6"/>
<dbReference type="Proteomes" id="UP000002168">
    <property type="component" value="Chromosome"/>
</dbReference>
<dbReference type="GO" id="GO:0005737">
    <property type="term" value="C:cytoplasm"/>
    <property type="evidence" value="ECO:0007669"/>
    <property type="project" value="UniProtKB-SubCell"/>
</dbReference>
<dbReference type="GO" id="GO:0051539">
    <property type="term" value="F:4 iron, 4 sulfur cluster binding"/>
    <property type="evidence" value="ECO:0007669"/>
    <property type="project" value="UniProtKB-UniRule"/>
</dbReference>
<dbReference type="GO" id="GO:0005524">
    <property type="term" value="F:ATP binding"/>
    <property type="evidence" value="ECO:0007669"/>
    <property type="project" value="UniProtKB-UniRule"/>
</dbReference>
<dbReference type="GO" id="GO:0000287">
    <property type="term" value="F:magnesium ion binding"/>
    <property type="evidence" value="ECO:0007669"/>
    <property type="project" value="UniProtKB-UniRule"/>
</dbReference>
<dbReference type="GO" id="GO:0016783">
    <property type="term" value="F:sulfurtransferase activity"/>
    <property type="evidence" value="ECO:0007669"/>
    <property type="project" value="UniProtKB-UniRule"/>
</dbReference>
<dbReference type="GO" id="GO:0000049">
    <property type="term" value="F:tRNA binding"/>
    <property type="evidence" value="ECO:0007669"/>
    <property type="project" value="UniProtKB-KW"/>
</dbReference>
<dbReference type="GO" id="GO:0034227">
    <property type="term" value="P:tRNA thio-modification"/>
    <property type="evidence" value="ECO:0007669"/>
    <property type="project" value="UniProtKB-UniRule"/>
</dbReference>
<dbReference type="CDD" id="cd24138">
    <property type="entry name" value="TtcA-like"/>
    <property type="match status" value="1"/>
</dbReference>
<dbReference type="Gene3D" id="3.40.50.620">
    <property type="entry name" value="HUPs"/>
    <property type="match status" value="1"/>
</dbReference>
<dbReference type="HAMAP" id="MF_01850">
    <property type="entry name" value="TtcA"/>
    <property type="match status" value="1"/>
</dbReference>
<dbReference type="InterPro" id="IPR014729">
    <property type="entry name" value="Rossmann-like_a/b/a_fold"/>
</dbReference>
<dbReference type="InterPro" id="IPR011063">
    <property type="entry name" value="TilS/TtcA_N"/>
</dbReference>
<dbReference type="InterPro" id="IPR012089">
    <property type="entry name" value="tRNA_Cyd_32_2_STrfase"/>
</dbReference>
<dbReference type="NCBIfam" id="NF007972">
    <property type="entry name" value="PRK10696.1"/>
    <property type="match status" value="1"/>
</dbReference>
<dbReference type="PANTHER" id="PTHR43686:SF1">
    <property type="entry name" value="AMINOTRAN_5 DOMAIN-CONTAINING PROTEIN"/>
    <property type="match status" value="1"/>
</dbReference>
<dbReference type="PANTHER" id="PTHR43686">
    <property type="entry name" value="SULFURTRANSFERASE-RELATED"/>
    <property type="match status" value="1"/>
</dbReference>
<dbReference type="Pfam" id="PF01171">
    <property type="entry name" value="ATP_bind_3"/>
    <property type="match status" value="1"/>
</dbReference>
<dbReference type="SUPFAM" id="SSF52402">
    <property type="entry name" value="Adenine nucleotide alpha hydrolases-like"/>
    <property type="match status" value="1"/>
</dbReference>
<comment type="function">
    <text evidence="1">Catalyzes the ATP-dependent 2-thiolation of cytidine in position 32 of tRNA, to form 2-thiocytidine (s(2)C32). The sulfur atoms are provided by the cysteine/cysteine desulfurase (IscS) system.</text>
</comment>
<comment type="catalytic activity">
    <reaction evidence="1">
        <text>cytidine(32) in tRNA + S-sulfanyl-L-cysteinyl-[cysteine desulfurase] + AH2 + ATP = 2-thiocytidine(32) in tRNA + L-cysteinyl-[cysteine desulfurase] + A + AMP + diphosphate + H(+)</text>
        <dbReference type="Rhea" id="RHEA:57048"/>
        <dbReference type="Rhea" id="RHEA-COMP:10288"/>
        <dbReference type="Rhea" id="RHEA-COMP:12157"/>
        <dbReference type="Rhea" id="RHEA-COMP:12158"/>
        <dbReference type="Rhea" id="RHEA-COMP:14821"/>
        <dbReference type="ChEBI" id="CHEBI:13193"/>
        <dbReference type="ChEBI" id="CHEBI:15378"/>
        <dbReference type="ChEBI" id="CHEBI:17499"/>
        <dbReference type="ChEBI" id="CHEBI:29950"/>
        <dbReference type="ChEBI" id="CHEBI:30616"/>
        <dbReference type="ChEBI" id="CHEBI:33019"/>
        <dbReference type="ChEBI" id="CHEBI:61963"/>
        <dbReference type="ChEBI" id="CHEBI:82748"/>
        <dbReference type="ChEBI" id="CHEBI:141453"/>
        <dbReference type="ChEBI" id="CHEBI:456215"/>
    </reaction>
    <physiologicalReaction direction="left-to-right" evidence="1">
        <dbReference type="Rhea" id="RHEA:57049"/>
    </physiologicalReaction>
</comment>
<comment type="cofactor">
    <cofactor evidence="1">
        <name>Mg(2+)</name>
        <dbReference type="ChEBI" id="CHEBI:18420"/>
    </cofactor>
</comment>
<comment type="cofactor">
    <cofactor evidence="1">
        <name>[4Fe-4S] cluster</name>
        <dbReference type="ChEBI" id="CHEBI:49883"/>
    </cofactor>
    <text evidence="1">Binds 1 [4Fe-4S] cluster per subunit. The cluster is chelated by three Cys residues, the fourth Fe has a free coordination site that may bind a sulfur atom transferred from the persulfide of IscS.</text>
</comment>
<comment type="pathway">
    <text evidence="1">tRNA modification.</text>
</comment>
<comment type="subunit">
    <text evidence="1">Homodimer.</text>
</comment>
<comment type="subcellular location">
    <subcellularLocation>
        <location evidence="1">Cytoplasm</location>
    </subcellularLocation>
</comment>
<comment type="miscellaneous">
    <text evidence="1">The thiolation reaction likely consists of two steps: a first activation step by ATP to form an adenylated intermediate of the target base of tRNA, and a second nucleophilic substitution step of the sulfur (S) atom supplied by the hydrosulfide attached to the Fe-S cluster.</text>
</comment>
<comment type="similarity">
    <text evidence="1">Belongs to the TtcA family.</text>
</comment>
<gene>
    <name evidence="1" type="primary">ttcA</name>
    <name type="ordered locus">Swoo_2415</name>
</gene>
<protein>
    <recommendedName>
        <fullName evidence="1">tRNA-cytidine(32) 2-sulfurtransferase</fullName>
        <ecNumber evidence="1">2.8.1.-</ecNumber>
    </recommendedName>
    <alternativeName>
        <fullName evidence="1">Two-thiocytidine biosynthesis protein A</fullName>
    </alternativeName>
    <alternativeName>
        <fullName evidence="1">tRNA 2-thiocytidine biosynthesis protein TtcA</fullName>
    </alternativeName>
</protein>
<proteinExistence type="inferred from homology"/>